<accession>A5DEQ9</accession>
<dbReference type="EMBL" id="CH408156">
    <property type="protein sequence ID" value="EDK37662.2"/>
    <property type="molecule type" value="Genomic_DNA"/>
</dbReference>
<dbReference type="RefSeq" id="XP_001486089.1">
    <property type="nucleotide sequence ID" value="XM_001486039.1"/>
</dbReference>
<dbReference type="SMR" id="A5DEQ9"/>
<dbReference type="FunCoup" id="A5DEQ9">
    <property type="interactions" value="54"/>
</dbReference>
<dbReference type="STRING" id="294746.A5DEQ9"/>
<dbReference type="GeneID" id="5127890"/>
<dbReference type="KEGG" id="pgu:PGUG_01760"/>
<dbReference type="VEuPathDB" id="FungiDB:PGUG_01760"/>
<dbReference type="eggNOG" id="KOG1471">
    <property type="taxonomic scope" value="Eukaryota"/>
</dbReference>
<dbReference type="HOGENOM" id="CLU_045138_0_1_1"/>
<dbReference type="InParanoid" id="A5DEQ9"/>
<dbReference type="OMA" id="KRVVTWN"/>
<dbReference type="OrthoDB" id="75724at2759"/>
<dbReference type="Proteomes" id="UP000001997">
    <property type="component" value="Unassembled WGS sequence"/>
</dbReference>
<dbReference type="GO" id="GO:0032541">
    <property type="term" value="C:cortical endoplasmic reticulum"/>
    <property type="evidence" value="ECO:0007669"/>
    <property type="project" value="EnsemblFungi"/>
</dbReference>
<dbReference type="GO" id="GO:0005829">
    <property type="term" value="C:cytosol"/>
    <property type="evidence" value="ECO:0007669"/>
    <property type="project" value="EnsemblFungi"/>
</dbReference>
<dbReference type="GO" id="GO:0005789">
    <property type="term" value="C:endoplasmic reticulum membrane"/>
    <property type="evidence" value="ECO:0007669"/>
    <property type="project" value="UniProtKB-SubCell"/>
</dbReference>
<dbReference type="GO" id="GO:0005886">
    <property type="term" value="C:plasma membrane"/>
    <property type="evidence" value="ECO:0007669"/>
    <property type="project" value="EnsemblFungi"/>
</dbReference>
<dbReference type="GO" id="GO:0020037">
    <property type="term" value="F:heme binding"/>
    <property type="evidence" value="ECO:0007669"/>
    <property type="project" value="EnsemblFungi"/>
</dbReference>
<dbReference type="GO" id="GO:0046872">
    <property type="term" value="F:metal ion binding"/>
    <property type="evidence" value="ECO:0007669"/>
    <property type="project" value="UniProtKB-KW"/>
</dbReference>
<dbReference type="GO" id="GO:0008526">
    <property type="term" value="F:phosphatidylinositol transfer activity"/>
    <property type="evidence" value="ECO:0007669"/>
    <property type="project" value="EnsemblFungi"/>
</dbReference>
<dbReference type="GO" id="GO:0043001">
    <property type="term" value="P:Golgi to plasma membrane protein transport"/>
    <property type="evidence" value="ECO:0007669"/>
    <property type="project" value="EnsemblFungi"/>
</dbReference>
<dbReference type="GO" id="GO:0046488">
    <property type="term" value="P:phosphatidylinositol metabolic process"/>
    <property type="evidence" value="ECO:0007669"/>
    <property type="project" value="EnsemblFungi"/>
</dbReference>
<dbReference type="GO" id="GO:2000114">
    <property type="term" value="P:regulation of establishment of cell polarity"/>
    <property type="evidence" value="ECO:0007669"/>
    <property type="project" value="EnsemblFungi"/>
</dbReference>
<dbReference type="GO" id="GO:0017157">
    <property type="term" value="P:regulation of exocytosis"/>
    <property type="evidence" value="ECO:0007669"/>
    <property type="project" value="EnsemblFungi"/>
</dbReference>
<dbReference type="CDD" id="cd00170">
    <property type="entry name" value="SEC14"/>
    <property type="match status" value="1"/>
</dbReference>
<dbReference type="Gene3D" id="3.40.525.10">
    <property type="entry name" value="CRAL-TRIO lipid binding domain"/>
    <property type="match status" value="1"/>
</dbReference>
<dbReference type="InterPro" id="IPR001251">
    <property type="entry name" value="CRAL-TRIO_dom"/>
</dbReference>
<dbReference type="InterPro" id="IPR036865">
    <property type="entry name" value="CRAL-TRIO_dom_sf"/>
</dbReference>
<dbReference type="InterPro" id="IPR036273">
    <property type="entry name" value="CRAL/TRIO_N_dom_sf"/>
</dbReference>
<dbReference type="InterPro" id="IPR042938">
    <property type="entry name" value="Sfh5"/>
</dbReference>
<dbReference type="PANTHER" id="PTHR47669">
    <property type="entry name" value="PHOSPHATIDYLINOSITOL TRANSFER PROTEIN SFH5"/>
    <property type="match status" value="1"/>
</dbReference>
<dbReference type="PANTHER" id="PTHR47669:SF1">
    <property type="entry name" value="PHOSPHATIDYLINOSITOL TRANSFER PROTEIN SFH5"/>
    <property type="match status" value="1"/>
</dbReference>
<dbReference type="Pfam" id="PF00650">
    <property type="entry name" value="CRAL_TRIO"/>
    <property type="match status" value="1"/>
</dbReference>
<dbReference type="SMART" id="SM00516">
    <property type="entry name" value="SEC14"/>
    <property type="match status" value="1"/>
</dbReference>
<dbReference type="SUPFAM" id="SSF52087">
    <property type="entry name" value="CRAL/TRIO domain"/>
    <property type="match status" value="1"/>
</dbReference>
<dbReference type="SUPFAM" id="SSF46938">
    <property type="entry name" value="CRAL/TRIO N-terminal domain"/>
    <property type="match status" value="1"/>
</dbReference>
<dbReference type="PROSITE" id="PS50191">
    <property type="entry name" value="CRAL_TRIO"/>
    <property type="match status" value="1"/>
</dbReference>
<gene>
    <name type="primary">SFH5</name>
    <name type="ORF">PGUG_01760</name>
</gene>
<keyword id="KW-0963">Cytoplasm</keyword>
<keyword id="KW-0256">Endoplasmic reticulum</keyword>
<keyword id="KW-0349">Heme</keyword>
<keyword id="KW-0408">Iron</keyword>
<keyword id="KW-0445">Lipid transport</keyword>
<keyword id="KW-0472">Membrane</keyword>
<keyword id="KW-0479">Metal-binding</keyword>
<keyword id="KW-0492">Microsome</keyword>
<keyword id="KW-1185">Reference proteome</keyword>
<keyword id="KW-0813">Transport</keyword>
<reference key="1">
    <citation type="journal article" date="2009" name="Nature">
        <title>Evolution of pathogenicity and sexual reproduction in eight Candida genomes.</title>
        <authorList>
            <person name="Butler G."/>
            <person name="Rasmussen M.D."/>
            <person name="Lin M.F."/>
            <person name="Santos M.A.S."/>
            <person name="Sakthikumar S."/>
            <person name="Munro C.A."/>
            <person name="Rheinbay E."/>
            <person name="Grabherr M."/>
            <person name="Forche A."/>
            <person name="Reedy J.L."/>
            <person name="Agrafioti I."/>
            <person name="Arnaud M.B."/>
            <person name="Bates S."/>
            <person name="Brown A.J.P."/>
            <person name="Brunke S."/>
            <person name="Costanzo M.C."/>
            <person name="Fitzpatrick D.A."/>
            <person name="de Groot P.W.J."/>
            <person name="Harris D."/>
            <person name="Hoyer L.L."/>
            <person name="Hube B."/>
            <person name="Klis F.M."/>
            <person name="Kodira C."/>
            <person name="Lennard N."/>
            <person name="Logue M.E."/>
            <person name="Martin R."/>
            <person name="Neiman A.M."/>
            <person name="Nikolaou E."/>
            <person name="Quail M.A."/>
            <person name="Quinn J."/>
            <person name="Santos M.C."/>
            <person name="Schmitzberger F.F."/>
            <person name="Sherlock G."/>
            <person name="Shah P."/>
            <person name="Silverstein K.A.T."/>
            <person name="Skrzypek M.S."/>
            <person name="Soll D."/>
            <person name="Staggs R."/>
            <person name="Stansfield I."/>
            <person name="Stumpf M.P.H."/>
            <person name="Sudbery P.E."/>
            <person name="Srikantha T."/>
            <person name="Zeng Q."/>
            <person name="Berman J."/>
            <person name="Berriman M."/>
            <person name="Heitman J."/>
            <person name="Gow N.A.R."/>
            <person name="Lorenz M.C."/>
            <person name="Birren B.W."/>
            <person name="Kellis M."/>
            <person name="Cuomo C.A."/>
        </authorList>
    </citation>
    <scope>NUCLEOTIDE SEQUENCE [LARGE SCALE GENOMIC DNA]</scope>
    <source>
        <strain>ATCC 6260 / CBS 566 / DSM 6381 / JCM 1539 / NBRC 10279 / NRRL Y-324</strain>
    </source>
</reference>
<sequence length="336" mass="38525">MSEPIEKPVEKPGVEPVSDVKDTDPAKKDQPVLVSTTKLTKTQSETLKKLIDELPQILEETGDSSYDEIYGYRINKSGLEHVHDEIRNEIVLKFLIAEEYKFEEARTRLINTFKWRKKFQPLSAAYSETFDKELDDLGVITKYDGTNENLHVVTWNLYGNLKSPKKLFQKFGQDDKAEKEGSPFLRWRIGLMERALSLIDFTDKSNSKIAQVHDYNNVSMFRMDPGMKAATKEIIKIFGDNYPELLSTKFFINVPTIMSWVFTFFRTIGLVSEDTWKKFQVLNSGNLATWFGEKNLPKAYNGSNDSTVESLFASEAKTEAPEYAKIMIHKAALDID</sequence>
<organism>
    <name type="scientific">Meyerozyma guilliermondii (strain ATCC 6260 / CBS 566 / DSM 6381 / JCM 1539 / NBRC 10279 / NRRL Y-324)</name>
    <name type="common">Yeast</name>
    <name type="synonym">Candida guilliermondii</name>
    <dbReference type="NCBI Taxonomy" id="294746"/>
    <lineage>
        <taxon>Eukaryota</taxon>
        <taxon>Fungi</taxon>
        <taxon>Dikarya</taxon>
        <taxon>Ascomycota</taxon>
        <taxon>Saccharomycotina</taxon>
        <taxon>Pichiomycetes</taxon>
        <taxon>Debaryomycetaceae</taxon>
        <taxon>Meyerozyma</taxon>
    </lineage>
</organism>
<feature type="chain" id="PRO_0000324986" description="Phosphatidylinositol transfer protein SFH5">
    <location>
        <begin position="1"/>
        <end position="336"/>
    </location>
</feature>
<feature type="domain" description="CRAL-TRIO" evidence="3">
    <location>
        <begin position="144"/>
        <end position="308"/>
    </location>
</feature>
<feature type="region of interest" description="Disordered" evidence="4">
    <location>
        <begin position="1"/>
        <end position="32"/>
    </location>
</feature>
<feature type="compositionally biased region" description="Basic and acidic residues" evidence="4">
    <location>
        <begin position="1"/>
        <end position="30"/>
    </location>
</feature>
<feature type="binding site" evidence="1">
    <location>
        <position position="158"/>
    </location>
    <ligand>
        <name>heme</name>
        <dbReference type="ChEBI" id="CHEBI:30413"/>
    </ligand>
</feature>
<feature type="binding site" evidence="1">
    <location>
        <position position="188"/>
    </location>
    <ligand>
        <name>heme</name>
        <dbReference type="ChEBI" id="CHEBI:30413"/>
    </ligand>
</feature>
<feature type="binding site" evidence="1">
    <location>
        <position position="213"/>
    </location>
    <ligand>
        <name>heme</name>
        <dbReference type="ChEBI" id="CHEBI:30413"/>
    </ligand>
</feature>
<feature type="binding site" description="proximal binding residue" evidence="1">
    <location>
        <position position="215"/>
    </location>
    <ligand>
        <name>heme</name>
        <dbReference type="ChEBI" id="CHEBI:30413"/>
    </ligand>
    <ligandPart>
        <name>Fe</name>
        <dbReference type="ChEBI" id="CHEBI:18248"/>
    </ligandPart>
</feature>
<feature type="binding site" evidence="1">
    <location>
        <position position="249"/>
    </location>
    <ligand>
        <name>heme</name>
        <dbReference type="ChEBI" id="CHEBI:30413"/>
    </ligand>
</feature>
<protein>
    <recommendedName>
        <fullName>Phosphatidylinositol transfer protein SFH5</fullName>
        <shortName>PITP SFH5</shortName>
    </recommendedName>
</protein>
<name>SFH5_PICGU</name>
<proteinExistence type="inferred from homology"/>
<evidence type="ECO:0000250" key="1">
    <source>
        <dbReference type="UniProtKB" id="A6ZQI5"/>
    </source>
</evidence>
<evidence type="ECO:0000250" key="2">
    <source>
        <dbReference type="UniProtKB" id="P47008"/>
    </source>
</evidence>
<evidence type="ECO:0000255" key="3">
    <source>
        <dbReference type="PROSITE-ProRule" id="PRU00056"/>
    </source>
</evidence>
<evidence type="ECO:0000256" key="4">
    <source>
        <dbReference type="SAM" id="MobiDB-lite"/>
    </source>
</evidence>
<evidence type="ECO:0000305" key="5"/>
<comment type="function">
    <text evidence="2">Non-classical phosphatidylinositol (PtdIns) transfer protein (PITP), which exhibits PtdIns-binding/transfer activity in the absence of detectable PtdCho-binding/transfer activity. Regulates PtdIns(4,5)P2 homeostasis at the plasma membrane. Heme-binding protein that may play a role in organic oxidant-induced stress responses.</text>
</comment>
<comment type="catalytic activity">
    <reaction evidence="2">
        <text>a 1,2-diacyl-sn-glycero-3-phospho-(1D-myo-inositol)(in) = a 1,2-diacyl-sn-glycero-3-phospho-(1D-myo-inositol)(out)</text>
        <dbReference type="Rhea" id="RHEA:38691"/>
        <dbReference type="ChEBI" id="CHEBI:57880"/>
    </reaction>
    <physiologicalReaction direction="left-to-right" evidence="2">
        <dbReference type="Rhea" id="RHEA:38692"/>
    </physiologicalReaction>
</comment>
<comment type="cofactor">
    <cofactor evidence="1">
        <name>heme b</name>
        <dbReference type="ChEBI" id="CHEBI:60344"/>
    </cofactor>
</comment>
<comment type="subcellular location">
    <subcellularLocation>
        <location evidence="2">Cytoplasm</location>
    </subcellularLocation>
    <subcellularLocation>
        <location evidence="2">Endoplasmic reticulum membrane</location>
        <topology evidence="2">Peripheral membrane protein</topology>
    </subcellularLocation>
    <subcellularLocation>
        <location evidence="2">Microsome membrane</location>
        <topology evidence="2">Peripheral membrane protein</topology>
    </subcellularLocation>
</comment>
<comment type="similarity">
    <text evidence="5">Belongs to the SFH5 family.</text>
</comment>